<comment type="subcellular location">
    <subcellularLocation>
        <location evidence="3">Membrane</location>
        <topology evidence="3">Single-pass membrane protein</topology>
    </subcellularLocation>
</comment>
<comment type="similarity">
    <text evidence="3">Belongs to the cTAGE family.</text>
</comment>
<evidence type="ECO:0000255" key="1"/>
<evidence type="ECO:0000256" key="2">
    <source>
        <dbReference type="SAM" id="MobiDB-lite"/>
    </source>
</evidence>
<evidence type="ECO:0000305" key="3"/>
<keyword id="KW-0175">Coiled coil</keyword>
<keyword id="KW-0472">Membrane</keyword>
<keyword id="KW-1185">Reference proteome</keyword>
<keyword id="KW-0812">Transmembrane</keyword>
<keyword id="KW-1133">Transmembrane helix</keyword>
<name>CTGE9_HUMAN</name>
<accession>A4FU28</accession>
<gene>
    <name type="primary">CTAGE9</name>
</gene>
<sequence length="777" mass="87953">MEEPGATPQPYLGLVLEELGRVVAALPESMRPDENPYGFPSELVVCAAVIGFFVVLLFLWRSFRSVRSRLYVGREQKLGATLSGLIEEKCKLLEKFSLIQKEYEGYEVESSLEDASFEKAAAEEARSLEATCEKLSRSNSELEDEILCLEKDLKEEKSKHSQQDELMADISKSIQSLEDESKSLKSQIAEAKIICKTFKMSEERRAIAIKDALNENSQLQTSHKQLFQQEAEVWKGQVSELNKQKITFEDSKVHAEQVLNDKENHIKTLTGHLPMMKDQAAVLEEDTTDDDNLELKVNSQWENGANLDDPPKGALKKLIHAAKLNVSLKSLEGERNHIIIQLSEVDKTKEELTEHIKNLQTQQASLQSENIYFESENQKLQQKLKIMTEFYQENEMKLYRKLTVEENYRIEEEEKLSRVEEKISHATEELETYRKLAKDLEEELERTVHFYQKQVISYEKRGHDNWLAARTAERNLSDLRKENAHNKQKLTERELKFELLEKDPNALDVSNTAFGREHSPCSPSPLGRPSSETRAFPSPQTLLEDPLRLSPVLPGGGGRGPSSPGNPLDHQITNERGEPSYDRLIDPHRAPSDTGSLSSPVEQDRRMMFPPPGQSYPDSTLPPQREDRFYSNSERLSGPAEPRSFKMTSLDKMDRSMPSEMESSRNDAKDDLGNLNVPDSSLPAENEATGPGLIPPPLAPISGPLFPVDTRGPFMRRGPPFPPPPPGTMFGASRGYFPPRDFPGPPHAPFAMRNIYPPRGLPPYLHPRPGFYPNPTF</sequence>
<proteinExistence type="evidence at transcript level"/>
<reference key="1">
    <citation type="journal article" date="2003" name="Nature">
        <title>The DNA sequence and analysis of human chromosome 6.</title>
        <authorList>
            <person name="Mungall A.J."/>
            <person name="Palmer S.A."/>
            <person name="Sims S.K."/>
            <person name="Edwards C.A."/>
            <person name="Ashurst J.L."/>
            <person name="Wilming L."/>
            <person name="Jones M.C."/>
            <person name="Horton R."/>
            <person name="Hunt S.E."/>
            <person name="Scott C.E."/>
            <person name="Gilbert J.G.R."/>
            <person name="Clamp M.E."/>
            <person name="Bethel G."/>
            <person name="Milne S."/>
            <person name="Ainscough R."/>
            <person name="Almeida J.P."/>
            <person name="Ambrose K.D."/>
            <person name="Andrews T.D."/>
            <person name="Ashwell R.I.S."/>
            <person name="Babbage A.K."/>
            <person name="Bagguley C.L."/>
            <person name="Bailey J."/>
            <person name="Banerjee R."/>
            <person name="Barker D.J."/>
            <person name="Barlow K.F."/>
            <person name="Bates K."/>
            <person name="Beare D.M."/>
            <person name="Beasley H."/>
            <person name="Beasley O."/>
            <person name="Bird C.P."/>
            <person name="Blakey S.E."/>
            <person name="Bray-Allen S."/>
            <person name="Brook J."/>
            <person name="Brown A.J."/>
            <person name="Brown J.Y."/>
            <person name="Burford D.C."/>
            <person name="Burrill W."/>
            <person name="Burton J."/>
            <person name="Carder C."/>
            <person name="Carter N.P."/>
            <person name="Chapman J.C."/>
            <person name="Clark S.Y."/>
            <person name="Clark G."/>
            <person name="Clee C.M."/>
            <person name="Clegg S."/>
            <person name="Cobley V."/>
            <person name="Collier R.E."/>
            <person name="Collins J.E."/>
            <person name="Colman L.K."/>
            <person name="Corby N.R."/>
            <person name="Coville G.J."/>
            <person name="Culley K.M."/>
            <person name="Dhami P."/>
            <person name="Davies J."/>
            <person name="Dunn M."/>
            <person name="Earthrowl M.E."/>
            <person name="Ellington A.E."/>
            <person name="Evans K.A."/>
            <person name="Faulkner L."/>
            <person name="Francis M.D."/>
            <person name="Frankish A."/>
            <person name="Frankland J."/>
            <person name="French L."/>
            <person name="Garner P."/>
            <person name="Garnett J."/>
            <person name="Ghori M.J."/>
            <person name="Gilby L.M."/>
            <person name="Gillson C.J."/>
            <person name="Glithero R.J."/>
            <person name="Grafham D.V."/>
            <person name="Grant M."/>
            <person name="Gribble S."/>
            <person name="Griffiths C."/>
            <person name="Griffiths M.N.D."/>
            <person name="Hall R."/>
            <person name="Halls K.S."/>
            <person name="Hammond S."/>
            <person name="Harley J.L."/>
            <person name="Hart E.A."/>
            <person name="Heath P.D."/>
            <person name="Heathcott R."/>
            <person name="Holmes S.J."/>
            <person name="Howden P.J."/>
            <person name="Howe K.L."/>
            <person name="Howell G.R."/>
            <person name="Huckle E."/>
            <person name="Humphray S.J."/>
            <person name="Humphries M.D."/>
            <person name="Hunt A.R."/>
            <person name="Johnson C.M."/>
            <person name="Joy A.A."/>
            <person name="Kay M."/>
            <person name="Keenan S.J."/>
            <person name="Kimberley A.M."/>
            <person name="King A."/>
            <person name="Laird G.K."/>
            <person name="Langford C."/>
            <person name="Lawlor S."/>
            <person name="Leongamornlert D.A."/>
            <person name="Leversha M."/>
            <person name="Lloyd C.R."/>
            <person name="Lloyd D.M."/>
            <person name="Loveland J.E."/>
            <person name="Lovell J."/>
            <person name="Martin S."/>
            <person name="Mashreghi-Mohammadi M."/>
            <person name="Maslen G.L."/>
            <person name="Matthews L."/>
            <person name="McCann O.T."/>
            <person name="McLaren S.J."/>
            <person name="McLay K."/>
            <person name="McMurray A."/>
            <person name="Moore M.J.F."/>
            <person name="Mullikin J.C."/>
            <person name="Niblett D."/>
            <person name="Nickerson T."/>
            <person name="Novik K.L."/>
            <person name="Oliver K."/>
            <person name="Overton-Larty E.K."/>
            <person name="Parker A."/>
            <person name="Patel R."/>
            <person name="Pearce A.V."/>
            <person name="Peck A.I."/>
            <person name="Phillimore B.J.C.T."/>
            <person name="Phillips S."/>
            <person name="Plumb R.W."/>
            <person name="Porter K.M."/>
            <person name="Ramsey Y."/>
            <person name="Ranby S.A."/>
            <person name="Rice C.M."/>
            <person name="Ross M.T."/>
            <person name="Searle S.M."/>
            <person name="Sehra H.K."/>
            <person name="Sheridan E."/>
            <person name="Skuce C.D."/>
            <person name="Smith S."/>
            <person name="Smith M."/>
            <person name="Spraggon L."/>
            <person name="Squares S.L."/>
            <person name="Steward C.A."/>
            <person name="Sycamore N."/>
            <person name="Tamlyn-Hall G."/>
            <person name="Tester J."/>
            <person name="Theaker A.J."/>
            <person name="Thomas D.W."/>
            <person name="Thorpe A."/>
            <person name="Tracey A."/>
            <person name="Tromans A."/>
            <person name="Tubby B."/>
            <person name="Wall M."/>
            <person name="Wallis J.M."/>
            <person name="West A.P."/>
            <person name="White S.S."/>
            <person name="Whitehead S.L."/>
            <person name="Whittaker H."/>
            <person name="Wild A."/>
            <person name="Willey D.J."/>
            <person name="Wilmer T.E."/>
            <person name="Wood J.M."/>
            <person name="Wray P.W."/>
            <person name="Wyatt J.C."/>
            <person name="Young L."/>
            <person name="Younger R.M."/>
            <person name="Bentley D.R."/>
            <person name="Coulson A."/>
            <person name="Durbin R.M."/>
            <person name="Hubbard T."/>
            <person name="Sulston J.E."/>
            <person name="Dunham I."/>
            <person name="Rogers J."/>
            <person name="Beck S."/>
        </authorList>
    </citation>
    <scope>NUCLEOTIDE SEQUENCE [LARGE SCALE GENOMIC DNA]</scope>
</reference>
<reference key="2">
    <citation type="journal article" date="2004" name="Genome Res.">
        <title>The status, quality, and expansion of the NIH full-length cDNA project: the Mammalian Gene Collection (MGC).</title>
        <authorList>
            <consortium name="The MGC Project Team"/>
        </authorList>
    </citation>
    <scope>NUCLEOTIDE SEQUENCE [LARGE SCALE MRNA] OF 218-763</scope>
</reference>
<dbReference type="EMBL" id="AC005587">
    <property type="status" value="NOT_ANNOTATED_CDS"/>
    <property type="molecule type" value="Genomic_DNA"/>
</dbReference>
<dbReference type="EMBL" id="BC101322">
    <property type="protein sequence ID" value="AAI01323.1"/>
    <property type="molecule type" value="mRNA"/>
</dbReference>
<dbReference type="CCDS" id="CCDS47475.1"/>
<dbReference type="RefSeq" id="NP_001139131.1">
    <property type="nucleotide sequence ID" value="NM_001145659.1"/>
</dbReference>
<dbReference type="SMR" id="A4FU28"/>
<dbReference type="BioGRID" id="569105">
    <property type="interactions" value="1"/>
</dbReference>
<dbReference type="FunCoup" id="A4FU28">
    <property type="interactions" value="5"/>
</dbReference>
<dbReference type="IntAct" id="A4FU28">
    <property type="interactions" value="1"/>
</dbReference>
<dbReference type="MINT" id="A4FU28"/>
<dbReference type="iPTMnet" id="A4FU28"/>
<dbReference type="PhosphoSitePlus" id="A4FU28"/>
<dbReference type="BioMuta" id="CTAGE9"/>
<dbReference type="jPOST" id="A4FU28"/>
<dbReference type="MassIVE" id="A4FU28"/>
<dbReference type="PaxDb" id="9606-ENSP00000395587"/>
<dbReference type="PeptideAtlas" id="A4FU28"/>
<dbReference type="Antibodypedia" id="72037">
    <property type="antibodies" value="1 antibodies from 1 providers"/>
</dbReference>
<dbReference type="DNASU" id="643854"/>
<dbReference type="Ensembl" id="ENST00000314099.10">
    <property type="protein sequence ID" value="ENSP00000395587.2"/>
    <property type="gene ID" value="ENSG00000236761.6"/>
</dbReference>
<dbReference type="GeneID" id="643854"/>
<dbReference type="KEGG" id="hsa:643854"/>
<dbReference type="MANE-Select" id="ENST00000314099.10">
    <property type="protein sequence ID" value="ENSP00000395587.2"/>
    <property type="RefSeq nucleotide sequence ID" value="NM_001145659.1"/>
    <property type="RefSeq protein sequence ID" value="NP_001139131.1"/>
</dbReference>
<dbReference type="UCSC" id="uc011ece.3">
    <property type="organism name" value="human"/>
</dbReference>
<dbReference type="AGR" id="HGNC:37275"/>
<dbReference type="CTD" id="643854"/>
<dbReference type="GeneCards" id="CTAGE9"/>
<dbReference type="HGNC" id="HGNC:37275">
    <property type="gene designation" value="CTAGE9"/>
</dbReference>
<dbReference type="HPA" id="ENSG00000236761">
    <property type="expression patterns" value="Tissue enriched (testis)"/>
</dbReference>
<dbReference type="neXtProt" id="NX_A4FU28"/>
<dbReference type="PharmGKB" id="PA165617886"/>
<dbReference type="VEuPathDB" id="HostDB:ENSG00000236761"/>
<dbReference type="eggNOG" id="ENOG502QUND">
    <property type="taxonomic scope" value="Eukaryota"/>
</dbReference>
<dbReference type="GeneTree" id="ENSGT00950000182767"/>
<dbReference type="HOGENOM" id="CLU_002106_2_0_1"/>
<dbReference type="InParanoid" id="A4FU28"/>
<dbReference type="OMA" id="ENEMTIH"/>
<dbReference type="OrthoDB" id="3548878at2759"/>
<dbReference type="PAN-GO" id="A4FU28">
    <property type="GO annotations" value="5 GO annotations based on evolutionary models"/>
</dbReference>
<dbReference type="PhylomeDB" id="A4FU28"/>
<dbReference type="TreeFam" id="TF333137"/>
<dbReference type="PathwayCommons" id="A4FU28"/>
<dbReference type="SignaLink" id="A4FU28"/>
<dbReference type="BioGRID-ORCS" id="643854">
    <property type="hits" value="210 hits in 1036 CRISPR screens"/>
</dbReference>
<dbReference type="GenomeRNAi" id="643854"/>
<dbReference type="Pharos" id="A4FU28">
    <property type="development level" value="Tdark"/>
</dbReference>
<dbReference type="PRO" id="PR:A4FU28"/>
<dbReference type="Proteomes" id="UP000005640">
    <property type="component" value="Chromosome 6"/>
</dbReference>
<dbReference type="RNAct" id="A4FU28">
    <property type="molecule type" value="protein"/>
</dbReference>
<dbReference type="Bgee" id="ENSG00000236761">
    <property type="expression patterns" value="Expressed in male germ line stem cell (sensu Vertebrata) in testis and 57 other cell types or tissues"/>
</dbReference>
<dbReference type="GO" id="GO:0070971">
    <property type="term" value="C:endoplasmic reticulum exit site"/>
    <property type="evidence" value="ECO:0000318"/>
    <property type="project" value="GO_Central"/>
</dbReference>
<dbReference type="GO" id="GO:0005789">
    <property type="term" value="C:endoplasmic reticulum membrane"/>
    <property type="evidence" value="ECO:0000318"/>
    <property type="project" value="GO_Central"/>
</dbReference>
<dbReference type="GO" id="GO:0006888">
    <property type="term" value="P:endoplasmic reticulum to Golgi vesicle-mediated transport"/>
    <property type="evidence" value="ECO:0000318"/>
    <property type="project" value="GO_Central"/>
</dbReference>
<dbReference type="GO" id="GO:0009306">
    <property type="term" value="P:protein secretion"/>
    <property type="evidence" value="ECO:0000318"/>
    <property type="project" value="GO_Central"/>
</dbReference>
<dbReference type="GO" id="GO:0035459">
    <property type="term" value="P:vesicle cargo loading"/>
    <property type="evidence" value="ECO:0000318"/>
    <property type="project" value="GO_Central"/>
</dbReference>
<dbReference type="FunFam" id="1.20.5.340:FF:000044">
    <property type="entry name" value="MIA SH3 domain ER export factor 2"/>
    <property type="match status" value="1"/>
</dbReference>
<dbReference type="Gene3D" id="1.20.5.340">
    <property type="match status" value="1"/>
</dbReference>
<dbReference type="InterPro" id="IPR051500">
    <property type="entry name" value="cTAGE_MIA/OTOR"/>
</dbReference>
<dbReference type="PANTHER" id="PTHR23158:SF57">
    <property type="entry name" value="CTAGE FAMILY MEMBER 15-RELATED"/>
    <property type="match status" value="1"/>
</dbReference>
<dbReference type="PANTHER" id="PTHR23158">
    <property type="entry name" value="MELANOMA INHIBITORY ACTIVITY-RELATED"/>
    <property type="match status" value="1"/>
</dbReference>
<feature type="chain" id="PRO_0000395455" description="cTAGE family member 9">
    <location>
        <begin position="1"/>
        <end position="777"/>
    </location>
</feature>
<feature type="transmembrane region" description="Helical" evidence="1">
    <location>
        <begin position="39"/>
        <end position="59"/>
    </location>
</feature>
<feature type="region of interest" description="Disordered" evidence="2">
    <location>
        <begin position="510"/>
        <end position="688"/>
    </location>
</feature>
<feature type="region of interest" description="Disordered" evidence="2">
    <location>
        <begin position="721"/>
        <end position="742"/>
    </location>
</feature>
<feature type="coiled-coil region" evidence="1">
    <location>
        <begin position="118"/>
        <end position="269"/>
    </location>
</feature>
<feature type="coiled-coil region" evidence="1">
    <location>
        <begin position="339"/>
        <end position="494"/>
    </location>
</feature>
<feature type="compositionally biased region" description="Polar residues" evidence="2">
    <location>
        <begin position="530"/>
        <end position="541"/>
    </location>
</feature>
<feature type="compositionally biased region" description="Basic and acidic residues" evidence="2">
    <location>
        <begin position="572"/>
        <end position="591"/>
    </location>
</feature>
<feature type="compositionally biased region" description="Basic and acidic residues" evidence="2">
    <location>
        <begin position="649"/>
        <end position="672"/>
    </location>
</feature>
<organism>
    <name type="scientific">Homo sapiens</name>
    <name type="common">Human</name>
    <dbReference type="NCBI Taxonomy" id="9606"/>
    <lineage>
        <taxon>Eukaryota</taxon>
        <taxon>Metazoa</taxon>
        <taxon>Chordata</taxon>
        <taxon>Craniata</taxon>
        <taxon>Vertebrata</taxon>
        <taxon>Euteleostomi</taxon>
        <taxon>Mammalia</taxon>
        <taxon>Eutheria</taxon>
        <taxon>Euarchontoglires</taxon>
        <taxon>Primates</taxon>
        <taxon>Haplorrhini</taxon>
        <taxon>Catarrhini</taxon>
        <taxon>Hominidae</taxon>
        <taxon>Homo</taxon>
    </lineage>
</organism>
<protein>
    <recommendedName>
        <fullName>cTAGE family member 9</fullName>
        <shortName>Protein cTAGE-9</shortName>
    </recommendedName>
</protein>